<reference key="1">
    <citation type="journal article" date="1986" name="Nucleic Acids Res.">
        <title>Nucleotide sequence of a cDNA encoding mouse beta casein.</title>
        <authorList>
            <person name="Yoshimura M."/>
            <person name="Banerjee M.R."/>
            <person name="Oka T."/>
        </authorList>
    </citation>
    <scope>NUCLEOTIDE SEQUENCE [MRNA]</scope>
</reference>
<reference key="2">
    <citation type="journal article" date="1989" name="Gene">
        <title>Isolation and structural analysis of the mouse beta-casein gene.</title>
        <authorList>
            <person name="Yoshimura M."/>
            <person name="Oka T."/>
        </authorList>
    </citation>
    <scope>NUCLEOTIDE SEQUENCE</scope>
</reference>
<reference key="3">
    <citation type="journal article" date="1990" name="Proc. Natl. Acad. Sci. U.S.A.">
        <title>Transfection of beta-casein chimeric gene and hormonal induction of its expression in primary murine mammary epithelial cells.</title>
        <authorList>
            <person name="Yoshimura M."/>
            <person name="Oka T."/>
        </authorList>
    </citation>
    <scope>NUCLEOTIDE SEQUENCE [GENOMIC DNA]</scope>
    <source>
        <strain>C3H/HeN</strain>
        <tissue>Liver</tissue>
    </source>
</reference>
<reference key="4">
    <citation type="journal article" date="2005" name="Science">
        <title>The transcriptional landscape of the mammalian genome.</title>
        <authorList>
            <person name="Carninci P."/>
            <person name="Kasukawa T."/>
            <person name="Katayama S."/>
            <person name="Gough J."/>
            <person name="Frith M.C."/>
            <person name="Maeda N."/>
            <person name="Oyama R."/>
            <person name="Ravasi T."/>
            <person name="Lenhard B."/>
            <person name="Wells C."/>
            <person name="Kodzius R."/>
            <person name="Shimokawa K."/>
            <person name="Bajic V.B."/>
            <person name="Brenner S.E."/>
            <person name="Batalov S."/>
            <person name="Forrest A.R."/>
            <person name="Zavolan M."/>
            <person name="Davis M.J."/>
            <person name="Wilming L.G."/>
            <person name="Aidinis V."/>
            <person name="Allen J.E."/>
            <person name="Ambesi-Impiombato A."/>
            <person name="Apweiler R."/>
            <person name="Aturaliya R.N."/>
            <person name="Bailey T.L."/>
            <person name="Bansal M."/>
            <person name="Baxter L."/>
            <person name="Beisel K.W."/>
            <person name="Bersano T."/>
            <person name="Bono H."/>
            <person name="Chalk A.M."/>
            <person name="Chiu K.P."/>
            <person name="Choudhary V."/>
            <person name="Christoffels A."/>
            <person name="Clutterbuck D.R."/>
            <person name="Crowe M.L."/>
            <person name="Dalla E."/>
            <person name="Dalrymple B.P."/>
            <person name="de Bono B."/>
            <person name="Della Gatta G."/>
            <person name="di Bernardo D."/>
            <person name="Down T."/>
            <person name="Engstrom P."/>
            <person name="Fagiolini M."/>
            <person name="Faulkner G."/>
            <person name="Fletcher C.F."/>
            <person name="Fukushima T."/>
            <person name="Furuno M."/>
            <person name="Futaki S."/>
            <person name="Gariboldi M."/>
            <person name="Georgii-Hemming P."/>
            <person name="Gingeras T.R."/>
            <person name="Gojobori T."/>
            <person name="Green R.E."/>
            <person name="Gustincich S."/>
            <person name="Harbers M."/>
            <person name="Hayashi Y."/>
            <person name="Hensch T.K."/>
            <person name="Hirokawa N."/>
            <person name="Hill D."/>
            <person name="Huminiecki L."/>
            <person name="Iacono M."/>
            <person name="Ikeo K."/>
            <person name="Iwama A."/>
            <person name="Ishikawa T."/>
            <person name="Jakt M."/>
            <person name="Kanapin A."/>
            <person name="Katoh M."/>
            <person name="Kawasawa Y."/>
            <person name="Kelso J."/>
            <person name="Kitamura H."/>
            <person name="Kitano H."/>
            <person name="Kollias G."/>
            <person name="Krishnan S.P."/>
            <person name="Kruger A."/>
            <person name="Kummerfeld S.K."/>
            <person name="Kurochkin I.V."/>
            <person name="Lareau L.F."/>
            <person name="Lazarevic D."/>
            <person name="Lipovich L."/>
            <person name="Liu J."/>
            <person name="Liuni S."/>
            <person name="McWilliam S."/>
            <person name="Madan Babu M."/>
            <person name="Madera M."/>
            <person name="Marchionni L."/>
            <person name="Matsuda H."/>
            <person name="Matsuzawa S."/>
            <person name="Miki H."/>
            <person name="Mignone F."/>
            <person name="Miyake S."/>
            <person name="Morris K."/>
            <person name="Mottagui-Tabar S."/>
            <person name="Mulder N."/>
            <person name="Nakano N."/>
            <person name="Nakauchi H."/>
            <person name="Ng P."/>
            <person name="Nilsson R."/>
            <person name="Nishiguchi S."/>
            <person name="Nishikawa S."/>
            <person name="Nori F."/>
            <person name="Ohara O."/>
            <person name="Okazaki Y."/>
            <person name="Orlando V."/>
            <person name="Pang K.C."/>
            <person name="Pavan W.J."/>
            <person name="Pavesi G."/>
            <person name="Pesole G."/>
            <person name="Petrovsky N."/>
            <person name="Piazza S."/>
            <person name="Reed J."/>
            <person name="Reid J.F."/>
            <person name="Ring B.Z."/>
            <person name="Ringwald M."/>
            <person name="Rost B."/>
            <person name="Ruan Y."/>
            <person name="Salzberg S.L."/>
            <person name="Sandelin A."/>
            <person name="Schneider C."/>
            <person name="Schoenbach C."/>
            <person name="Sekiguchi K."/>
            <person name="Semple C.A."/>
            <person name="Seno S."/>
            <person name="Sessa L."/>
            <person name="Sheng Y."/>
            <person name="Shibata Y."/>
            <person name="Shimada H."/>
            <person name="Shimada K."/>
            <person name="Silva D."/>
            <person name="Sinclair B."/>
            <person name="Sperling S."/>
            <person name="Stupka E."/>
            <person name="Sugiura K."/>
            <person name="Sultana R."/>
            <person name="Takenaka Y."/>
            <person name="Taki K."/>
            <person name="Tammoja K."/>
            <person name="Tan S.L."/>
            <person name="Tang S."/>
            <person name="Taylor M.S."/>
            <person name="Tegner J."/>
            <person name="Teichmann S.A."/>
            <person name="Ueda H.R."/>
            <person name="van Nimwegen E."/>
            <person name="Verardo R."/>
            <person name="Wei C.L."/>
            <person name="Yagi K."/>
            <person name="Yamanishi H."/>
            <person name="Zabarovsky E."/>
            <person name="Zhu S."/>
            <person name="Zimmer A."/>
            <person name="Hide W."/>
            <person name="Bult C."/>
            <person name="Grimmond S.M."/>
            <person name="Teasdale R.D."/>
            <person name="Liu E.T."/>
            <person name="Brusic V."/>
            <person name="Quackenbush J."/>
            <person name="Wahlestedt C."/>
            <person name="Mattick J.S."/>
            <person name="Hume D.A."/>
            <person name="Kai C."/>
            <person name="Sasaki D."/>
            <person name="Tomaru Y."/>
            <person name="Fukuda S."/>
            <person name="Kanamori-Katayama M."/>
            <person name="Suzuki M."/>
            <person name="Aoki J."/>
            <person name="Arakawa T."/>
            <person name="Iida J."/>
            <person name="Imamura K."/>
            <person name="Itoh M."/>
            <person name="Kato T."/>
            <person name="Kawaji H."/>
            <person name="Kawagashira N."/>
            <person name="Kawashima T."/>
            <person name="Kojima M."/>
            <person name="Kondo S."/>
            <person name="Konno H."/>
            <person name="Nakano K."/>
            <person name="Ninomiya N."/>
            <person name="Nishio T."/>
            <person name="Okada M."/>
            <person name="Plessy C."/>
            <person name="Shibata K."/>
            <person name="Shiraki T."/>
            <person name="Suzuki S."/>
            <person name="Tagami M."/>
            <person name="Waki K."/>
            <person name="Watahiki A."/>
            <person name="Okamura-Oho Y."/>
            <person name="Suzuki H."/>
            <person name="Kawai J."/>
            <person name="Hayashizaki Y."/>
        </authorList>
    </citation>
    <scope>NUCLEOTIDE SEQUENCE [LARGE SCALE MRNA]</scope>
    <source>
        <strain>C57BL/6J</strain>
        <tissue>Mammary gland</tissue>
    </source>
</reference>
<reference key="5">
    <citation type="journal article" date="2004" name="Genome Res.">
        <title>The status, quality, and expansion of the NIH full-length cDNA project: the Mammalian Gene Collection (MGC).</title>
        <authorList>
            <consortium name="The MGC Project Team"/>
        </authorList>
    </citation>
    <scope>NUCLEOTIDE SEQUENCE [LARGE SCALE MRNA]</scope>
    <source>
        <tissue>Mammary gland</tissue>
    </source>
</reference>
<sequence>MKVFILACLVALALARETTFTVSSETDSISSEESVEHINEQKLQKVNLMGQLQAEDVLQAKVHSSIQSQPQAFPYAQAQTISCNPVPQNIQPIAQPPVVPSLGPVISPELESFLKAKATILPKHKQMPLLNSETVLRLINSQIPSLASLANLHLPQSLVQLLAQVVQAFPQTHLVSSQTQLSLPQSKVLYFLQQVAPFLPQDMSVQDLLQYLELLNPTVQFPATPQHSVSV</sequence>
<feature type="signal peptide" evidence="1">
    <location>
        <begin position="1"/>
        <end position="15"/>
    </location>
</feature>
<feature type="chain" id="PRO_0000004477" description="Beta-casein">
    <location>
        <begin position="16"/>
        <end position="231"/>
    </location>
</feature>
<feature type="modified residue" description="Phosphoserine" evidence="3">
    <location>
        <position position="23"/>
    </location>
</feature>
<feature type="modified residue" description="Phosphothreonine" evidence="3">
    <location>
        <position position="26"/>
    </location>
</feature>
<feature type="modified residue" description="Phosphoserine" evidence="2">
    <location>
        <position position="28"/>
    </location>
</feature>
<feature type="modified residue" description="Phosphoserine" evidence="2">
    <location>
        <position position="30"/>
    </location>
</feature>
<feature type="modified residue" description="Phosphoserine" evidence="2">
    <location>
        <position position="31"/>
    </location>
</feature>
<feature type="sequence conflict" description="In Ref. 5; AAH19189." evidence="4" ref="5">
    <original>V</original>
    <variation>T</variation>
    <location>
        <position position="3"/>
    </location>
</feature>
<feature type="sequence conflict" description="In Ref. 4; BAB32374/BAB32375 and 5; AAH19114/AAH19189." evidence="4" ref="4 5">
    <location>
        <position position="41"/>
    </location>
</feature>
<feature type="sequence conflict" description="In Ref. 4; BAB32374." evidence="4" ref="4">
    <original>S</original>
    <variation>C</variation>
    <location>
        <position position="145"/>
    </location>
</feature>
<feature type="sequence conflict" description="In Ref. 5; AAH13332." evidence="4" ref="5">
    <original>Q</original>
    <variation>R</variation>
    <location>
        <position position="156"/>
    </location>
</feature>
<feature type="sequence conflict" description="In Ref. 4; BAB32375." evidence="4" ref="4">
    <original>VV</original>
    <variation>GG</variation>
    <location>
        <begin position="165"/>
        <end position="166"/>
    </location>
</feature>
<feature type="sequence conflict" description="In Ref. 4; BAB32374." evidence="4" ref="4">
    <original>L</original>
    <variation>V</variation>
    <location>
        <position position="192"/>
    </location>
</feature>
<feature type="sequence conflict" description="In Ref. 4; BAB32374/BAB32375." evidence="4" ref="4">
    <original>T</original>
    <variation>P</variation>
    <location>
        <position position="218"/>
    </location>
</feature>
<name>CASB_MOUSE</name>
<proteinExistence type="evidence at transcript level"/>
<accession>P10598</accession>
<accession>Q543D9</accession>
<accession>Q8VCT6</accession>
<accession>Q8VCU8</accession>
<accession>Q91VI5</accession>
<accession>Q922Y5</accession>
<accession>Q9D1U6</accession>
<accession>Q9D1U7</accession>
<evidence type="ECO:0000250" key="1"/>
<evidence type="ECO:0000250" key="2">
    <source>
        <dbReference type="UniProtKB" id="P05814"/>
    </source>
</evidence>
<evidence type="ECO:0000250" key="3">
    <source>
        <dbReference type="UniProtKB" id="Q9GKK3"/>
    </source>
</evidence>
<evidence type="ECO:0000305" key="4"/>
<organism>
    <name type="scientific">Mus musculus</name>
    <name type="common">Mouse</name>
    <dbReference type="NCBI Taxonomy" id="10090"/>
    <lineage>
        <taxon>Eukaryota</taxon>
        <taxon>Metazoa</taxon>
        <taxon>Chordata</taxon>
        <taxon>Craniata</taxon>
        <taxon>Vertebrata</taxon>
        <taxon>Euteleostomi</taxon>
        <taxon>Mammalia</taxon>
        <taxon>Eutheria</taxon>
        <taxon>Euarchontoglires</taxon>
        <taxon>Glires</taxon>
        <taxon>Rodentia</taxon>
        <taxon>Myomorpha</taxon>
        <taxon>Muroidea</taxon>
        <taxon>Muridae</taxon>
        <taxon>Murinae</taxon>
        <taxon>Mus</taxon>
        <taxon>Mus</taxon>
    </lineage>
</organism>
<gene>
    <name type="primary">Csn2</name>
    <name type="synonym">Csnb</name>
</gene>
<comment type="function">
    <text>Important role in determination of the surface properties of the casein micelles.</text>
</comment>
<comment type="subcellular location">
    <subcellularLocation>
        <location>Secreted</location>
    </subcellularLocation>
</comment>
<comment type="tissue specificity">
    <text>Mammary gland specific. Secreted in milk.</text>
</comment>
<comment type="similarity">
    <text evidence="4">Belongs to the beta-casein family.</text>
</comment>
<protein>
    <recommendedName>
        <fullName>Beta-casein</fullName>
    </recommendedName>
</protein>
<dbReference type="EMBL" id="X04490">
    <property type="protein sequence ID" value="CAA28178.1"/>
    <property type="molecule type" value="mRNA"/>
</dbReference>
<dbReference type="EMBL" id="X13484">
    <property type="protein sequence ID" value="CAA31840.1"/>
    <property type="molecule type" value="Genomic_DNA"/>
</dbReference>
<dbReference type="EMBL" id="AK021324">
    <property type="protein sequence ID" value="BAB32374.1"/>
    <property type="molecule type" value="mRNA"/>
</dbReference>
<dbReference type="EMBL" id="AK021328">
    <property type="protein sequence ID" value="BAB32375.1"/>
    <property type="molecule type" value="mRNA"/>
</dbReference>
<dbReference type="EMBL" id="AK052803">
    <property type="protein sequence ID" value="BAC35152.1"/>
    <property type="molecule type" value="mRNA"/>
</dbReference>
<dbReference type="EMBL" id="AK052805">
    <property type="protein sequence ID" value="BAC35153.1"/>
    <property type="molecule type" value="mRNA"/>
</dbReference>
<dbReference type="EMBL" id="AK085694">
    <property type="protein sequence ID" value="BAC39508.1"/>
    <property type="molecule type" value="mRNA"/>
</dbReference>
<dbReference type="EMBL" id="AK085729">
    <property type="protein sequence ID" value="BAC39522.1"/>
    <property type="molecule type" value="mRNA"/>
</dbReference>
<dbReference type="EMBL" id="AK142616">
    <property type="protein sequence ID" value="BAE25131.1"/>
    <property type="molecule type" value="mRNA"/>
</dbReference>
<dbReference type="EMBL" id="AK142620">
    <property type="protein sequence ID" value="BAE25133.1"/>
    <property type="molecule type" value="mRNA"/>
</dbReference>
<dbReference type="EMBL" id="AK142635">
    <property type="protein sequence ID" value="BAE25141.1"/>
    <property type="molecule type" value="mRNA"/>
</dbReference>
<dbReference type="EMBL" id="AK164747">
    <property type="protein sequence ID" value="BAE37898.1"/>
    <property type="molecule type" value="mRNA"/>
</dbReference>
<dbReference type="EMBL" id="AK164791">
    <property type="protein sequence ID" value="BAE37917.1"/>
    <property type="molecule type" value="mRNA"/>
</dbReference>
<dbReference type="EMBL" id="AK164792">
    <property type="protein sequence ID" value="BAE37918.1"/>
    <property type="molecule type" value="mRNA"/>
</dbReference>
<dbReference type="EMBL" id="AK164793">
    <property type="protein sequence ID" value="BAE37919.1"/>
    <property type="molecule type" value="mRNA"/>
</dbReference>
<dbReference type="EMBL" id="AK164794">
    <property type="protein sequence ID" value="BAE37920.1"/>
    <property type="molecule type" value="mRNA"/>
</dbReference>
<dbReference type="EMBL" id="BC013332">
    <property type="protein sequence ID" value="AAH13332.1"/>
    <property type="molecule type" value="mRNA"/>
</dbReference>
<dbReference type="EMBL" id="BC019114">
    <property type="protein sequence ID" value="AAH19114.1"/>
    <property type="molecule type" value="mRNA"/>
</dbReference>
<dbReference type="EMBL" id="BC019189">
    <property type="protein sequence ID" value="AAH19189.1"/>
    <property type="molecule type" value="mRNA"/>
</dbReference>
<dbReference type="EMBL" id="BC021153">
    <property type="protein sequence ID" value="AAH21153.1"/>
    <property type="molecule type" value="mRNA"/>
</dbReference>
<dbReference type="CCDS" id="CCDS39131.1"/>
<dbReference type="PIR" id="JU0061">
    <property type="entry name" value="JU0061"/>
</dbReference>
<dbReference type="RefSeq" id="NP_001272949.1">
    <property type="nucleotide sequence ID" value="NM_001286020.1"/>
</dbReference>
<dbReference type="RefSeq" id="NP_001272950.1">
    <property type="nucleotide sequence ID" value="NM_001286021.1"/>
</dbReference>
<dbReference type="RefSeq" id="NP_001272952.1">
    <property type="nucleotide sequence ID" value="NM_001286023.1"/>
</dbReference>
<dbReference type="RefSeq" id="NP_034102.1">
    <property type="nucleotide sequence ID" value="NM_009972.2"/>
</dbReference>
<dbReference type="BioGRID" id="198938">
    <property type="interactions" value="3"/>
</dbReference>
<dbReference type="FunCoup" id="P10598">
    <property type="interactions" value="399"/>
</dbReference>
<dbReference type="STRING" id="10090.ENSMUSP00000143341"/>
<dbReference type="PhosphoSitePlus" id="P10598"/>
<dbReference type="PaxDb" id="10090-ENSMUSP00000080976"/>
<dbReference type="PeptideAtlas" id="P10598"/>
<dbReference type="ProteomicsDB" id="265548"/>
<dbReference type="Antibodypedia" id="24273">
    <property type="antibodies" value="208 antibodies from 25 providers"/>
</dbReference>
<dbReference type="DNASU" id="12991"/>
<dbReference type="Ensembl" id="ENSMUST00000197422.5">
    <property type="protein sequence ID" value="ENSMUSP00000143341.2"/>
    <property type="gene ID" value="ENSMUSG00000063157.10"/>
</dbReference>
<dbReference type="Ensembl" id="ENSMUST00000199624.5">
    <property type="protein sequence ID" value="ENSMUSP00000143409.2"/>
    <property type="gene ID" value="ENSMUSG00000063157.10"/>
</dbReference>
<dbReference type="GeneID" id="12991"/>
<dbReference type="KEGG" id="mmu:12991"/>
<dbReference type="UCSC" id="uc008xyu.2">
    <property type="organism name" value="mouse"/>
</dbReference>
<dbReference type="AGR" id="MGI:88541"/>
<dbReference type="CTD" id="1447"/>
<dbReference type="MGI" id="MGI:88541">
    <property type="gene designation" value="Csn2"/>
</dbReference>
<dbReference type="VEuPathDB" id="HostDB:ENSMUSG00000063157"/>
<dbReference type="eggNOG" id="ENOG502RU0R">
    <property type="taxonomic scope" value="Eukaryota"/>
</dbReference>
<dbReference type="GeneTree" id="ENSGT00390000001890"/>
<dbReference type="InParanoid" id="P10598"/>
<dbReference type="OMA" id="EIMEVPK"/>
<dbReference type="OrthoDB" id="9838331at2759"/>
<dbReference type="PhylomeDB" id="P10598"/>
<dbReference type="TreeFam" id="TF336929"/>
<dbReference type="BioGRID-ORCS" id="12991">
    <property type="hits" value="1 hit in 76 CRISPR screens"/>
</dbReference>
<dbReference type="ChiTaRS" id="Csn2">
    <property type="organism name" value="mouse"/>
</dbReference>
<dbReference type="PRO" id="PR:P10598"/>
<dbReference type="Proteomes" id="UP000000589">
    <property type="component" value="Chromosome 5"/>
</dbReference>
<dbReference type="RNAct" id="P10598">
    <property type="molecule type" value="protein"/>
</dbReference>
<dbReference type="Bgee" id="ENSMUSG00000063157">
    <property type="expression patterns" value="Expressed in thoracic mammary gland and 23 other cell types or tissues"/>
</dbReference>
<dbReference type="ExpressionAtlas" id="P10598">
    <property type="expression patterns" value="baseline and differential"/>
</dbReference>
<dbReference type="GO" id="GO:0005576">
    <property type="term" value="C:extracellular region"/>
    <property type="evidence" value="ECO:0000314"/>
    <property type="project" value="MGI"/>
</dbReference>
<dbReference type="InterPro" id="IPR001588">
    <property type="entry name" value="Casein"/>
</dbReference>
<dbReference type="InterPro" id="IPR016345">
    <property type="entry name" value="Casein_beta"/>
</dbReference>
<dbReference type="InterPro" id="IPR031305">
    <property type="entry name" value="Casein_CS"/>
</dbReference>
<dbReference type="PANTHER" id="PTHR11500">
    <property type="entry name" value="BETA CASEIN"/>
    <property type="match status" value="1"/>
</dbReference>
<dbReference type="PANTHER" id="PTHR11500:SF0">
    <property type="entry name" value="BETA-CASEIN"/>
    <property type="match status" value="1"/>
</dbReference>
<dbReference type="Pfam" id="PF00363">
    <property type="entry name" value="Casein"/>
    <property type="match status" value="1"/>
</dbReference>
<dbReference type="PIRSF" id="PIRSF002372">
    <property type="entry name" value="Beta-casein"/>
    <property type="match status" value="1"/>
</dbReference>
<dbReference type="PROSITE" id="PS00306">
    <property type="entry name" value="CASEIN_ALPHA_BETA"/>
    <property type="match status" value="1"/>
</dbReference>
<keyword id="KW-0494">Milk protein</keyword>
<keyword id="KW-0597">Phosphoprotein</keyword>
<keyword id="KW-1185">Reference proteome</keyword>
<keyword id="KW-0964">Secreted</keyword>
<keyword id="KW-0732">Signal</keyword>